<reference key="1">
    <citation type="submission" date="2004-11" db="EMBL/GenBank/DDBJ databases">
        <authorList>
            <consortium name="The German cDNA consortium"/>
        </authorList>
    </citation>
    <scope>NUCLEOTIDE SEQUENCE [LARGE SCALE MRNA] (ISOFORMS 1 AND 2)</scope>
    <source>
        <tissue>Kidney</tissue>
    </source>
</reference>
<proteinExistence type="evidence at transcript level"/>
<protein>
    <recommendedName>
        <fullName>Mitochondrial carrier homolog 2</fullName>
    </recommendedName>
</protein>
<evidence type="ECO:0000250" key="1">
    <source>
        <dbReference type="UniProtKB" id="Q791V5"/>
    </source>
</evidence>
<evidence type="ECO:0000250" key="2">
    <source>
        <dbReference type="UniProtKB" id="Q9Y6C9"/>
    </source>
</evidence>
<evidence type="ECO:0000255" key="3"/>
<evidence type="ECO:0000303" key="4">
    <source ref="1"/>
</evidence>
<evidence type="ECO:0000305" key="5"/>
<accession>Q5R5M0</accession>
<accession>Q5RAJ9</accession>
<gene>
    <name type="primary">MTCH2</name>
</gene>
<keyword id="KW-0007">Acetylation</keyword>
<keyword id="KW-0025">Alternative splicing</keyword>
<keyword id="KW-0472">Membrane</keyword>
<keyword id="KW-0496">Mitochondrion</keyword>
<keyword id="KW-1000">Mitochondrion outer membrane</keyword>
<keyword id="KW-1185">Reference proteome</keyword>
<keyword id="KW-0677">Repeat</keyword>
<keyword id="KW-0812">Transmembrane</keyword>
<keyword id="KW-1133">Transmembrane helix</keyword>
<name>MTCH2_PONAB</name>
<dbReference type="EMBL" id="CR859016">
    <property type="protein sequence ID" value="CAH91211.1"/>
    <property type="molecule type" value="mRNA"/>
</dbReference>
<dbReference type="EMBL" id="CR860837">
    <property type="protein sequence ID" value="CAH92946.1"/>
    <property type="molecule type" value="mRNA"/>
</dbReference>
<dbReference type="RefSeq" id="NP_001127387.1">
    <molecule id="Q5R5M0-2"/>
    <property type="nucleotide sequence ID" value="NM_001133915.2"/>
</dbReference>
<dbReference type="RefSeq" id="NP_001128884.2">
    <molecule id="Q5R5M0-1"/>
    <property type="nucleotide sequence ID" value="NM_001135412.2"/>
</dbReference>
<dbReference type="RefSeq" id="XP_009244656.1">
    <property type="nucleotide sequence ID" value="XM_009246381.1"/>
</dbReference>
<dbReference type="SMR" id="Q5R5M0"/>
<dbReference type="FunCoup" id="Q5R5M0">
    <property type="interactions" value="3269"/>
</dbReference>
<dbReference type="STRING" id="9601.ENSPPYP00000003778"/>
<dbReference type="Ensembl" id="ENSPPYT00000003925.3">
    <molecule id="Q5R5M0-1"/>
    <property type="protein sequence ID" value="ENSPPYP00000003778.3"/>
    <property type="gene ID" value="ENSPPYG00000003296.3"/>
</dbReference>
<dbReference type="Ensembl" id="ENSPPYT00000047954.1">
    <molecule id="Q5R5M0-2"/>
    <property type="protein sequence ID" value="ENSPPYP00000025265.1"/>
    <property type="gene ID" value="ENSPPYG00000003296.3"/>
</dbReference>
<dbReference type="GeneID" id="100174454"/>
<dbReference type="KEGG" id="pon:100174454"/>
<dbReference type="CTD" id="23788"/>
<dbReference type="eggNOG" id="KOG2745">
    <property type="taxonomic scope" value="Eukaryota"/>
</dbReference>
<dbReference type="GeneTree" id="ENSGT00390000000020"/>
<dbReference type="HOGENOM" id="CLU_058300_2_0_1"/>
<dbReference type="InParanoid" id="Q5R5M0"/>
<dbReference type="OrthoDB" id="10253709at2759"/>
<dbReference type="Proteomes" id="UP000001595">
    <property type="component" value="Chromosome 11"/>
</dbReference>
<dbReference type="GO" id="GO:0005741">
    <property type="term" value="C:mitochondrial outer membrane"/>
    <property type="evidence" value="ECO:0000250"/>
    <property type="project" value="UniProtKB"/>
</dbReference>
<dbReference type="GO" id="GO:0032977">
    <property type="term" value="F:membrane insertase activity"/>
    <property type="evidence" value="ECO:0000250"/>
    <property type="project" value="UniProtKB"/>
</dbReference>
<dbReference type="GO" id="GO:0071478">
    <property type="term" value="P:cellular response to radiation"/>
    <property type="evidence" value="ECO:0007669"/>
    <property type="project" value="Ensembl"/>
</dbReference>
<dbReference type="GO" id="GO:0090152">
    <property type="term" value="P:establishment of protein localization to mitochondrial membrane involved in mitochondrial fission"/>
    <property type="evidence" value="ECO:0007669"/>
    <property type="project" value="Ensembl"/>
</dbReference>
<dbReference type="GO" id="GO:0061484">
    <property type="term" value="P:hematopoietic stem cell homeostasis"/>
    <property type="evidence" value="ECO:0007669"/>
    <property type="project" value="Ensembl"/>
</dbReference>
<dbReference type="GO" id="GO:0035701">
    <property type="term" value="P:hematopoietic stem cell migration"/>
    <property type="evidence" value="ECO:0007669"/>
    <property type="project" value="Ensembl"/>
</dbReference>
<dbReference type="GO" id="GO:0097284">
    <property type="term" value="P:hepatocyte apoptotic process"/>
    <property type="evidence" value="ECO:0007669"/>
    <property type="project" value="Ensembl"/>
</dbReference>
<dbReference type="GO" id="GO:0006089">
    <property type="term" value="P:lactate metabolic process"/>
    <property type="evidence" value="ECO:0007669"/>
    <property type="project" value="Ensembl"/>
</dbReference>
<dbReference type="GO" id="GO:0055088">
    <property type="term" value="P:lipid homeostasis"/>
    <property type="evidence" value="ECO:0000250"/>
    <property type="project" value="UniProtKB"/>
</dbReference>
<dbReference type="GO" id="GO:0042775">
    <property type="term" value="P:mitochondrial ATP synthesis coupled electron transport"/>
    <property type="evidence" value="ECO:0007669"/>
    <property type="project" value="Ensembl"/>
</dbReference>
<dbReference type="GO" id="GO:0045820">
    <property type="term" value="P:negative regulation of glycolytic process"/>
    <property type="evidence" value="ECO:0007669"/>
    <property type="project" value="Ensembl"/>
</dbReference>
<dbReference type="GO" id="GO:0010917">
    <property type="term" value="P:negative regulation of mitochondrial membrane potential"/>
    <property type="evidence" value="ECO:0007669"/>
    <property type="project" value="Ensembl"/>
</dbReference>
<dbReference type="GO" id="GO:0043065">
    <property type="term" value="P:positive regulation of apoptotic process"/>
    <property type="evidence" value="ECO:0000250"/>
    <property type="project" value="UniProtKB"/>
</dbReference>
<dbReference type="GO" id="GO:1902231">
    <property type="term" value="P:positive regulation of intrinsic apoptotic signaling pathway in response to DNA damage"/>
    <property type="evidence" value="ECO:0007669"/>
    <property type="project" value="Ensembl"/>
</dbReference>
<dbReference type="GO" id="GO:2000738">
    <property type="term" value="P:positive regulation of stem cell differentiation"/>
    <property type="evidence" value="ECO:0000250"/>
    <property type="project" value="UniProtKB"/>
</dbReference>
<dbReference type="GO" id="GO:0045040">
    <property type="term" value="P:protein insertion into mitochondrial outer membrane"/>
    <property type="evidence" value="ECO:0000250"/>
    <property type="project" value="UniProtKB"/>
</dbReference>
<dbReference type="GO" id="GO:0010635">
    <property type="term" value="P:regulation of mitochondrial fusion"/>
    <property type="evidence" value="ECO:0000250"/>
    <property type="project" value="UniProtKB"/>
</dbReference>
<dbReference type="GO" id="GO:1902108">
    <property type="term" value="P:regulation of mitochondrial membrane permeability involved in apoptotic process"/>
    <property type="evidence" value="ECO:0007669"/>
    <property type="project" value="Ensembl"/>
</dbReference>
<dbReference type="FunFam" id="1.50.40.10:FF:000035">
    <property type="entry name" value="Mitochondrial carrier homolog 2 variant"/>
    <property type="match status" value="1"/>
</dbReference>
<dbReference type="Gene3D" id="1.50.40.10">
    <property type="entry name" value="Mitochondrial carrier domain"/>
    <property type="match status" value="1"/>
</dbReference>
<dbReference type="InterPro" id="IPR018108">
    <property type="entry name" value="Mitochondrial_sb/sol_carrier"/>
</dbReference>
<dbReference type="InterPro" id="IPR023395">
    <property type="entry name" value="Mt_carrier_dom_sf"/>
</dbReference>
<dbReference type="PANTHER" id="PTHR10780">
    <property type="entry name" value="MITOCHONDRIAL CARRIER HOMOLOG"/>
    <property type="match status" value="1"/>
</dbReference>
<dbReference type="PANTHER" id="PTHR10780:SF20">
    <property type="entry name" value="MITOCHONDRIAL CARRIER HOMOLOG 2"/>
    <property type="match status" value="1"/>
</dbReference>
<dbReference type="Pfam" id="PF00153">
    <property type="entry name" value="Mito_carr"/>
    <property type="match status" value="1"/>
</dbReference>
<dbReference type="SUPFAM" id="SSF103506">
    <property type="entry name" value="Mitochondrial carrier"/>
    <property type="match status" value="1"/>
</dbReference>
<dbReference type="PROSITE" id="PS50920">
    <property type="entry name" value="SOLCAR"/>
    <property type="match status" value="2"/>
</dbReference>
<sequence>MADAASQVLLGSGLTILSQPLMYVKVLIQVGYEPLPPTIGRNIFGRQVCQLPGLFSYAQHIASIDGRRGLFTGLTPRLCSGVLGTVVHGKVLQHYQESDKGEELGPGNVQKEVSSSFDHVIKETTREMIARSAATLITHPFHVITLRSMVQFIGRESKYCGLCDSIITIYREEGILGFFAGLVPRLLGDILSLWLCNSLAYLVNTYALDSGVSTMNEMKSYSQAVTGFFASMLTYPFVLVSNLMAVNNCGLAGGCPPYSPIYTSWIDCWCMLQKEGNMSRGNSLFFRKVPFGKTYCCDLKMLI</sequence>
<comment type="function">
    <text evidence="1 2">Protein insertase that mediates insertion of transmembrane proteins into the mitochondrial outer membrane. Catalyzes insertion of proteins with alpha-helical transmembrane regions, such as signal-anchored, tail-anchored and multi-pass membrane proteins. Does not mediate insertion of beta-barrel transmembrane proteins (By similarity). Also acts as a receptor for the truncated form of pro-apoptotic BH3-interacting domain death agonist (p15 BID) and has therefore a critical function in apoptosis. Regulates the quiescence/cycling of hematopoietic stem cells (HSCs). Acts as a regulator of mitochondrial fusion, essential for the naive-to-primed interconversion of embryonic stem cells (ESCs). Acts as a regulator of lipid homeostasis and has a regulatory role in adipocyte differentiation and biology (By similarity).</text>
</comment>
<comment type="subunit">
    <text evidence="1">Interacts with p15BID.</text>
</comment>
<comment type="subcellular location">
    <subcellularLocation>
        <location evidence="1">Mitochondrion outer membrane</location>
        <topology evidence="3">Multi-pass membrane protein</topology>
    </subcellularLocation>
</comment>
<comment type="alternative products">
    <event type="alternative splicing"/>
    <isoform>
        <id>Q5R5M0-1</id>
        <name>1</name>
        <sequence type="displayed"/>
    </isoform>
    <isoform>
        <id>Q5R5M0-2</id>
        <name>2</name>
        <sequence type="described" ref="VSP_013814"/>
    </isoform>
</comment>
<comment type="similarity">
    <text evidence="5">Belongs to the mitochondrial carrier (TC 2.A.29) family.</text>
</comment>
<feature type="initiator methionine" description="Removed" evidence="2">
    <location>
        <position position="1"/>
    </location>
</feature>
<feature type="chain" id="PRO_0000090639" description="Mitochondrial carrier homolog 2">
    <location>
        <begin position="2"/>
        <end position="303"/>
    </location>
</feature>
<feature type="topological domain" description="Mitochondrial intermembrane" evidence="5">
    <location>
        <begin position="2"/>
        <end position="15"/>
    </location>
</feature>
<feature type="transmembrane region" description="Helical; Name=1" evidence="3">
    <location>
        <begin position="16"/>
        <end position="36"/>
    </location>
</feature>
<feature type="topological domain" description="Cytoplasmic" evidence="5">
    <location>
        <begin position="37"/>
        <end position="77"/>
    </location>
</feature>
<feature type="transmembrane region" description="Helical; Name=2" evidence="3">
    <location>
        <begin position="78"/>
        <end position="92"/>
    </location>
</feature>
<feature type="topological domain" description="Mitochondrial intermembrane" evidence="5">
    <location>
        <begin position="93"/>
        <end position="135"/>
    </location>
</feature>
<feature type="transmembrane region" description="Helical; Name=3" evidence="3">
    <location>
        <begin position="136"/>
        <end position="156"/>
    </location>
</feature>
<feature type="topological domain" description="Cytoplasmic" evidence="5">
    <location>
        <begin position="157"/>
        <end position="180"/>
    </location>
</feature>
<feature type="transmembrane region" description="Helical; Name=4" evidence="3">
    <location>
        <begin position="181"/>
        <end position="199"/>
    </location>
</feature>
<feature type="topological domain" description="Mitochondrial intermembrane" evidence="5">
    <location>
        <begin position="200"/>
        <end position="231"/>
    </location>
</feature>
<feature type="transmembrane region" description="Helical; Name=5" evidence="3">
    <location>
        <begin position="232"/>
        <end position="252"/>
    </location>
</feature>
<feature type="topological domain" description="Cytoplasmic" evidence="5">
    <location>
        <begin position="253"/>
        <end position="280"/>
    </location>
</feature>
<feature type="transmembrane region" description="Helical; Name=6" evidence="3">
    <location>
        <begin position="281"/>
        <end position="303"/>
    </location>
</feature>
<feature type="repeat" description="Solcar 1">
    <location>
        <begin position="2"/>
        <end position="98"/>
    </location>
</feature>
<feature type="repeat" description="Solcar 2">
    <location>
        <begin position="118"/>
        <end position="206"/>
    </location>
</feature>
<feature type="modified residue" description="N-acetylalanine" evidence="2">
    <location>
        <position position="2"/>
    </location>
</feature>
<feature type="splice variant" id="VSP_013814" description="In isoform 2." evidence="4">
    <location>
        <begin position="94"/>
        <end position="102"/>
    </location>
</feature>
<feature type="sequence conflict" description="In Ref. 1; CAH92946." evidence="5" ref="1">
    <original>A</original>
    <variation>T</variation>
    <location>
        <position position="62"/>
    </location>
</feature>
<feature type="sequence conflict" description="In Ref. 1; CAH92946." evidence="5" ref="1">
    <original>F</original>
    <variation>C</variation>
    <location>
        <position position="152"/>
    </location>
</feature>
<organism>
    <name type="scientific">Pongo abelii</name>
    <name type="common">Sumatran orangutan</name>
    <name type="synonym">Pongo pygmaeus abelii</name>
    <dbReference type="NCBI Taxonomy" id="9601"/>
    <lineage>
        <taxon>Eukaryota</taxon>
        <taxon>Metazoa</taxon>
        <taxon>Chordata</taxon>
        <taxon>Craniata</taxon>
        <taxon>Vertebrata</taxon>
        <taxon>Euteleostomi</taxon>
        <taxon>Mammalia</taxon>
        <taxon>Eutheria</taxon>
        <taxon>Euarchontoglires</taxon>
        <taxon>Primates</taxon>
        <taxon>Haplorrhini</taxon>
        <taxon>Catarrhini</taxon>
        <taxon>Hominidae</taxon>
        <taxon>Pongo</taxon>
    </lineage>
</organism>